<proteinExistence type="evidence at transcript level"/>
<accession>Q7Z098</accession>
<feature type="chain" id="PRO_0000035102" description="Iota-conotoxin-like R11.5">
    <location>
        <begin position="1" status="less than"/>
        <end position="45"/>
    </location>
</feature>
<feature type="propeptide" id="PRO_0000035103" description="Removed by a carboxypeptidase" evidence="1">
    <location>
        <position position="46"/>
    </location>
</feature>
<feature type="disulfide bond" evidence="2">
    <location>
        <begin position="5"/>
        <end position="19"/>
    </location>
</feature>
<feature type="disulfide bond" evidence="2">
    <location>
        <begin position="12"/>
        <end position="22"/>
    </location>
</feature>
<feature type="disulfide bond" evidence="2">
    <location>
        <begin position="18"/>
        <end position="27"/>
    </location>
</feature>
<feature type="disulfide bond" evidence="2">
    <location>
        <begin position="21"/>
        <end position="38"/>
    </location>
</feature>
<feature type="non-terminal residue">
    <location>
        <position position="1"/>
    </location>
</feature>
<sequence length="46" mass="4832">GAVPCGKDGRQCRNHADCCNCCPIGTCAPSTNWILPGCSTGQFMTR</sequence>
<dbReference type="EMBL" id="AY208955">
    <property type="protein sequence ID" value="AAP41537.1"/>
    <property type="molecule type" value="mRNA"/>
</dbReference>
<dbReference type="GO" id="GO:0005576">
    <property type="term" value="C:extracellular region"/>
    <property type="evidence" value="ECO:0007669"/>
    <property type="project" value="UniProtKB-SubCell"/>
</dbReference>
<dbReference type="GO" id="GO:0017080">
    <property type="term" value="F:sodium channel regulator activity"/>
    <property type="evidence" value="ECO:0007669"/>
    <property type="project" value="UniProtKB-KW"/>
</dbReference>
<dbReference type="GO" id="GO:0090729">
    <property type="term" value="F:toxin activity"/>
    <property type="evidence" value="ECO:0007669"/>
    <property type="project" value="UniProtKB-KW"/>
</dbReference>
<dbReference type="Gene3D" id="4.10.40.80">
    <property type="match status" value="1"/>
</dbReference>
<dbReference type="InterPro" id="IPR013141">
    <property type="entry name" value="Conotoxin-I_CS"/>
</dbReference>
<dbReference type="InterPro" id="IPR012624">
    <property type="entry name" value="Toxin_19"/>
</dbReference>
<dbReference type="Pfam" id="PF08088">
    <property type="entry name" value="Toxin_19"/>
    <property type="match status" value="1"/>
</dbReference>
<dbReference type="PROSITE" id="PS60019">
    <property type="entry name" value="I_CONOTOXIN"/>
    <property type="match status" value="1"/>
</dbReference>
<name>I1B5_CONRA</name>
<evidence type="ECO:0000250" key="1"/>
<evidence type="ECO:0000250" key="2">
    <source>
        <dbReference type="UniProtKB" id="Q7Z094"/>
    </source>
</evidence>
<evidence type="ECO:0000305" key="3"/>
<comment type="function">
    <text evidence="1">Iota-conotoxins bind to voltage-gated sodium channels (Nav) and act as agonists by shifting the voltage-dependence of activation to more hyperpolarized levels. Produces general excitatory symptoms (By similarity).</text>
</comment>
<comment type="subcellular location">
    <subcellularLocation>
        <location evidence="1">Secreted</location>
    </subcellularLocation>
</comment>
<comment type="tissue specificity">
    <text>Expressed by the venom duct.</text>
</comment>
<comment type="domain">
    <text>The cysteine framework is XI (C-C-CC-CC-C-C).</text>
</comment>
<comment type="similarity">
    <text evidence="3">Belongs to the conotoxin I1 superfamily.</text>
</comment>
<keyword id="KW-1015">Disulfide bond</keyword>
<keyword id="KW-0872">Ion channel impairing toxin</keyword>
<keyword id="KW-0528">Neurotoxin</keyword>
<keyword id="KW-0964">Secreted</keyword>
<keyword id="KW-0800">Toxin</keyword>
<keyword id="KW-0738">Voltage-gated sodium channel impairing toxin</keyword>
<organism>
    <name type="scientific">Conus radiatus</name>
    <name type="common">Rayed cone</name>
    <dbReference type="NCBI Taxonomy" id="61198"/>
    <lineage>
        <taxon>Eukaryota</taxon>
        <taxon>Metazoa</taxon>
        <taxon>Spiralia</taxon>
        <taxon>Lophotrochozoa</taxon>
        <taxon>Mollusca</taxon>
        <taxon>Gastropoda</taxon>
        <taxon>Caenogastropoda</taxon>
        <taxon>Neogastropoda</taxon>
        <taxon>Conoidea</taxon>
        <taxon>Conidae</taxon>
        <taxon>Conus</taxon>
        <taxon>Phasmoconus</taxon>
    </lineage>
</organism>
<reference key="1">
    <citation type="journal article" date="2003" name="J. Neurochem.">
        <title>Novel excitatory Conus peptides define a new conotoxin superfamily.</title>
        <authorList>
            <person name="Jimenez E.C."/>
            <person name="Shetty R.P."/>
            <person name="Lirazan M."/>
            <person name="Rivier J."/>
            <person name="Walker C."/>
            <person name="Abogadie F.C."/>
            <person name="Yoshikami D."/>
            <person name="Cruz L.J."/>
            <person name="Olivera B.M."/>
        </authorList>
    </citation>
    <scope>NUCLEOTIDE SEQUENCE [MRNA]</scope>
    <source>
        <tissue>Venom duct</tissue>
    </source>
</reference>
<protein>
    <recommendedName>
        <fullName>Iota-conotoxin-like R11.5</fullName>
    </recommendedName>
</protein>